<evidence type="ECO:0000255" key="1">
    <source>
        <dbReference type="HAMAP-Rule" id="MF_00658"/>
    </source>
</evidence>
<reference key="1">
    <citation type="journal article" date="2008" name="PLoS ONE">
        <title>Genome biology of Actinobacillus pleuropneumoniae JL03, an isolate of serotype 3 prevalent in China.</title>
        <authorList>
            <person name="Xu Z."/>
            <person name="Zhou Y."/>
            <person name="Li L."/>
            <person name="Zhou R."/>
            <person name="Xiao S."/>
            <person name="Wan Y."/>
            <person name="Zhang S."/>
            <person name="Wang K."/>
            <person name="Li W."/>
            <person name="Li L."/>
            <person name="Jin H."/>
            <person name="Kang M."/>
            <person name="Dalai B."/>
            <person name="Li T."/>
            <person name="Liu L."/>
            <person name="Cheng Y."/>
            <person name="Zhang L."/>
            <person name="Xu T."/>
            <person name="Zheng H."/>
            <person name="Pu S."/>
            <person name="Wang B."/>
            <person name="Gu W."/>
            <person name="Zhang X.L."/>
            <person name="Zhu G.-F."/>
            <person name="Wang S."/>
            <person name="Zhao G.-P."/>
            <person name="Chen H."/>
        </authorList>
    </citation>
    <scope>NUCLEOTIDE SEQUENCE [LARGE SCALE GENOMIC DNA]</scope>
    <source>
        <strain>JL03</strain>
    </source>
</reference>
<comment type="function">
    <text evidence="1">Specifically methylates the pseudouridine at position 1915 (m3Psi1915) in 23S rRNA.</text>
</comment>
<comment type="catalytic activity">
    <reaction evidence="1">
        <text>pseudouridine(1915) in 23S rRNA + S-adenosyl-L-methionine = N(3)-methylpseudouridine(1915) in 23S rRNA + S-adenosyl-L-homocysteine + H(+)</text>
        <dbReference type="Rhea" id="RHEA:42752"/>
        <dbReference type="Rhea" id="RHEA-COMP:10221"/>
        <dbReference type="Rhea" id="RHEA-COMP:10222"/>
        <dbReference type="ChEBI" id="CHEBI:15378"/>
        <dbReference type="ChEBI" id="CHEBI:57856"/>
        <dbReference type="ChEBI" id="CHEBI:59789"/>
        <dbReference type="ChEBI" id="CHEBI:65314"/>
        <dbReference type="ChEBI" id="CHEBI:74486"/>
        <dbReference type="EC" id="2.1.1.177"/>
    </reaction>
</comment>
<comment type="subunit">
    <text evidence="1">Homodimer.</text>
</comment>
<comment type="subcellular location">
    <subcellularLocation>
        <location evidence="1">Cytoplasm</location>
    </subcellularLocation>
</comment>
<comment type="similarity">
    <text evidence="1">Belongs to the RNA methyltransferase RlmH family.</text>
</comment>
<gene>
    <name evidence="1" type="primary">rlmH</name>
    <name type="ordered locus">APJL_1633</name>
</gene>
<feature type="chain" id="PRO_0000366554" description="Ribosomal RNA large subunit methyltransferase H">
    <location>
        <begin position="1"/>
        <end position="155"/>
    </location>
</feature>
<feature type="binding site" evidence="1">
    <location>
        <position position="72"/>
    </location>
    <ligand>
        <name>S-adenosyl-L-methionine</name>
        <dbReference type="ChEBI" id="CHEBI:59789"/>
    </ligand>
</feature>
<feature type="binding site" evidence="1">
    <location>
        <position position="103"/>
    </location>
    <ligand>
        <name>S-adenosyl-L-methionine</name>
        <dbReference type="ChEBI" id="CHEBI:59789"/>
    </ligand>
</feature>
<feature type="binding site" evidence="1">
    <location>
        <begin position="122"/>
        <end position="127"/>
    </location>
    <ligand>
        <name>S-adenosyl-L-methionine</name>
        <dbReference type="ChEBI" id="CHEBI:59789"/>
    </ligand>
</feature>
<name>RLMH_ACTPJ</name>
<sequence length="155" mass="17347">MKIQLIAVGQKMPDWVKVGFEEYQRRFPKDMPFELIEIPAGKRGKNADIKRILEQEGKAMLAAAGKGKVVTLDIPGKPWTTEQLASQLEAWKNDGRDVCLLIGGPEGLSPECKAAAEKSWSLSPLTLPHPMVRVIVAESLYRAWSLTTNHPYHRE</sequence>
<accession>B0BRS6</accession>
<proteinExistence type="inferred from homology"/>
<keyword id="KW-0963">Cytoplasm</keyword>
<keyword id="KW-0489">Methyltransferase</keyword>
<keyword id="KW-0698">rRNA processing</keyword>
<keyword id="KW-0949">S-adenosyl-L-methionine</keyword>
<keyword id="KW-0808">Transferase</keyword>
<organism>
    <name type="scientific">Actinobacillus pleuropneumoniae serotype 3 (strain JL03)</name>
    <dbReference type="NCBI Taxonomy" id="434271"/>
    <lineage>
        <taxon>Bacteria</taxon>
        <taxon>Pseudomonadati</taxon>
        <taxon>Pseudomonadota</taxon>
        <taxon>Gammaproteobacteria</taxon>
        <taxon>Pasteurellales</taxon>
        <taxon>Pasteurellaceae</taxon>
        <taxon>Actinobacillus</taxon>
    </lineage>
</organism>
<protein>
    <recommendedName>
        <fullName evidence="1">Ribosomal RNA large subunit methyltransferase H</fullName>
        <ecNumber evidence="1">2.1.1.177</ecNumber>
    </recommendedName>
    <alternativeName>
        <fullName evidence="1">23S rRNA (pseudouridine1915-N3)-methyltransferase</fullName>
    </alternativeName>
    <alternativeName>
        <fullName evidence="1">23S rRNA m3Psi1915 methyltransferase</fullName>
    </alternativeName>
    <alternativeName>
        <fullName evidence="1">rRNA (pseudouridine-N3-)-methyltransferase RlmH</fullName>
    </alternativeName>
</protein>
<dbReference type="EC" id="2.1.1.177" evidence="1"/>
<dbReference type="EMBL" id="CP000687">
    <property type="protein sequence ID" value="ABY70185.1"/>
    <property type="molecule type" value="Genomic_DNA"/>
</dbReference>
<dbReference type="RefSeq" id="WP_012263306.1">
    <property type="nucleotide sequence ID" value="NC_010278.1"/>
</dbReference>
<dbReference type="SMR" id="B0BRS6"/>
<dbReference type="KEGG" id="apj:APJL_1633"/>
<dbReference type="HOGENOM" id="CLU_100552_1_0_6"/>
<dbReference type="Proteomes" id="UP000008547">
    <property type="component" value="Chromosome"/>
</dbReference>
<dbReference type="GO" id="GO:0005737">
    <property type="term" value="C:cytoplasm"/>
    <property type="evidence" value="ECO:0007669"/>
    <property type="project" value="UniProtKB-SubCell"/>
</dbReference>
<dbReference type="GO" id="GO:0070038">
    <property type="term" value="F:rRNA (pseudouridine-N3-)-methyltransferase activity"/>
    <property type="evidence" value="ECO:0007669"/>
    <property type="project" value="UniProtKB-UniRule"/>
</dbReference>
<dbReference type="CDD" id="cd18081">
    <property type="entry name" value="RlmH-like"/>
    <property type="match status" value="1"/>
</dbReference>
<dbReference type="Gene3D" id="3.40.1280.10">
    <property type="match status" value="1"/>
</dbReference>
<dbReference type="HAMAP" id="MF_00658">
    <property type="entry name" value="23SrRNA_methyltr_H"/>
    <property type="match status" value="1"/>
</dbReference>
<dbReference type="InterPro" id="IPR029028">
    <property type="entry name" value="Alpha/beta_knot_MTases"/>
</dbReference>
<dbReference type="InterPro" id="IPR003742">
    <property type="entry name" value="RlmH-like"/>
</dbReference>
<dbReference type="InterPro" id="IPR029026">
    <property type="entry name" value="tRNA_m1G_MTases_N"/>
</dbReference>
<dbReference type="NCBIfam" id="NF000984">
    <property type="entry name" value="PRK00103.1-1"/>
    <property type="match status" value="1"/>
</dbReference>
<dbReference type="NCBIfam" id="NF000986">
    <property type="entry name" value="PRK00103.1-4"/>
    <property type="match status" value="1"/>
</dbReference>
<dbReference type="NCBIfam" id="TIGR00246">
    <property type="entry name" value="tRNA_RlmH_YbeA"/>
    <property type="match status" value="1"/>
</dbReference>
<dbReference type="PANTHER" id="PTHR33603">
    <property type="entry name" value="METHYLTRANSFERASE"/>
    <property type="match status" value="1"/>
</dbReference>
<dbReference type="PANTHER" id="PTHR33603:SF1">
    <property type="entry name" value="RIBOSOMAL RNA LARGE SUBUNIT METHYLTRANSFERASE H"/>
    <property type="match status" value="1"/>
</dbReference>
<dbReference type="Pfam" id="PF02590">
    <property type="entry name" value="SPOUT_MTase"/>
    <property type="match status" value="1"/>
</dbReference>
<dbReference type="PIRSF" id="PIRSF004505">
    <property type="entry name" value="MT_bac"/>
    <property type="match status" value="1"/>
</dbReference>
<dbReference type="SUPFAM" id="SSF75217">
    <property type="entry name" value="alpha/beta knot"/>
    <property type="match status" value="1"/>
</dbReference>